<accession>Q2RYT5</accession>
<reference key="1">
    <citation type="journal article" date="2005" name="Proc. Natl. Acad. Sci. U.S.A.">
        <title>The genome of Salinibacter ruber: convergence and gene exchange among hyperhalophilic bacteria and archaea.</title>
        <authorList>
            <person name="Mongodin E.F."/>
            <person name="Nelson K.E."/>
            <person name="Daugherty S."/>
            <person name="DeBoy R.T."/>
            <person name="Wister J."/>
            <person name="Khouri H."/>
            <person name="Weidman J."/>
            <person name="Walsh D.A."/>
            <person name="Papke R.T."/>
            <person name="Sanchez Perez G."/>
            <person name="Sharma A.K."/>
            <person name="Nesbo C.L."/>
            <person name="MacLeod D."/>
            <person name="Bapteste E."/>
            <person name="Doolittle W.F."/>
            <person name="Charlebois R.L."/>
            <person name="Legault B."/>
            <person name="Rodriguez-Valera F."/>
        </authorList>
    </citation>
    <scope>NUCLEOTIDE SEQUENCE [LARGE SCALE GENOMIC DNA]</scope>
    <source>
        <strain>DSM 13855 / CECT 5946 / M31</strain>
    </source>
</reference>
<name>RL20_SALRD</name>
<sequence>MPRATNKPATRRRRKKILNKAKGYWGRRSKVYKVAKHAVEKGLQYAYRDRRQKKRRFRRLWITRINAATRQHDVSYSQFMGQYRKSDLDMNRKVLADLAVHDPDAFEQIVDHVME</sequence>
<proteinExistence type="inferred from homology"/>
<organism>
    <name type="scientific">Salinibacter ruber (strain DSM 13855 / M31)</name>
    <dbReference type="NCBI Taxonomy" id="309807"/>
    <lineage>
        <taxon>Bacteria</taxon>
        <taxon>Pseudomonadati</taxon>
        <taxon>Rhodothermota</taxon>
        <taxon>Rhodothermia</taxon>
        <taxon>Rhodothermales</taxon>
        <taxon>Salinibacteraceae</taxon>
        <taxon>Salinibacter</taxon>
    </lineage>
</organism>
<keyword id="KW-1185">Reference proteome</keyword>
<keyword id="KW-0687">Ribonucleoprotein</keyword>
<keyword id="KW-0689">Ribosomal protein</keyword>
<keyword id="KW-0694">RNA-binding</keyword>
<keyword id="KW-0699">rRNA-binding</keyword>
<comment type="function">
    <text evidence="1">Binds directly to 23S ribosomal RNA and is necessary for the in vitro assembly process of the 50S ribosomal subunit. It is not involved in the protein synthesizing functions of that subunit.</text>
</comment>
<comment type="similarity">
    <text evidence="1">Belongs to the bacterial ribosomal protein bL20 family.</text>
</comment>
<dbReference type="EMBL" id="CP000159">
    <property type="protein sequence ID" value="ABC43888.1"/>
    <property type="molecule type" value="Genomic_DNA"/>
</dbReference>
<dbReference type="RefSeq" id="WP_011405508.1">
    <property type="nucleotide sequence ID" value="NC_007677.1"/>
</dbReference>
<dbReference type="RefSeq" id="YP_446896.1">
    <property type="nucleotide sequence ID" value="NC_007677.1"/>
</dbReference>
<dbReference type="SMR" id="Q2RYT5"/>
<dbReference type="STRING" id="309807.SRU_2805"/>
<dbReference type="EnsemblBacteria" id="ABC43888">
    <property type="protein sequence ID" value="ABC43888"/>
    <property type="gene ID" value="SRU_2805"/>
</dbReference>
<dbReference type="GeneID" id="83729820"/>
<dbReference type="KEGG" id="sru:SRU_2805"/>
<dbReference type="PATRIC" id="fig|309807.25.peg.2925"/>
<dbReference type="eggNOG" id="COG0292">
    <property type="taxonomic scope" value="Bacteria"/>
</dbReference>
<dbReference type="HOGENOM" id="CLU_123265_0_1_10"/>
<dbReference type="OrthoDB" id="9808966at2"/>
<dbReference type="Proteomes" id="UP000008674">
    <property type="component" value="Chromosome"/>
</dbReference>
<dbReference type="GO" id="GO:1990904">
    <property type="term" value="C:ribonucleoprotein complex"/>
    <property type="evidence" value="ECO:0007669"/>
    <property type="project" value="UniProtKB-KW"/>
</dbReference>
<dbReference type="GO" id="GO:0005840">
    <property type="term" value="C:ribosome"/>
    <property type="evidence" value="ECO:0007669"/>
    <property type="project" value="UniProtKB-KW"/>
</dbReference>
<dbReference type="GO" id="GO:0019843">
    <property type="term" value="F:rRNA binding"/>
    <property type="evidence" value="ECO:0007669"/>
    <property type="project" value="UniProtKB-UniRule"/>
</dbReference>
<dbReference type="GO" id="GO:0003735">
    <property type="term" value="F:structural constituent of ribosome"/>
    <property type="evidence" value="ECO:0007669"/>
    <property type="project" value="InterPro"/>
</dbReference>
<dbReference type="GO" id="GO:0000027">
    <property type="term" value="P:ribosomal large subunit assembly"/>
    <property type="evidence" value="ECO:0007669"/>
    <property type="project" value="UniProtKB-UniRule"/>
</dbReference>
<dbReference type="GO" id="GO:0006412">
    <property type="term" value="P:translation"/>
    <property type="evidence" value="ECO:0007669"/>
    <property type="project" value="InterPro"/>
</dbReference>
<dbReference type="CDD" id="cd07026">
    <property type="entry name" value="Ribosomal_L20"/>
    <property type="match status" value="1"/>
</dbReference>
<dbReference type="FunFam" id="1.10.1900.20:FF:000001">
    <property type="entry name" value="50S ribosomal protein L20"/>
    <property type="match status" value="1"/>
</dbReference>
<dbReference type="Gene3D" id="6.10.160.10">
    <property type="match status" value="1"/>
</dbReference>
<dbReference type="Gene3D" id="1.10.1900.20">
    <property type="entry name" value="Ribosomal protein L20"/>
    <property type="match status" value="1"/>
</dbReference>
<dbReference type="HAMAP" id="MF_00382">
    <property type="entry name" value="Ribosomal_bL20"/>
    <property type="match status" value="1"/>
</dbReference>
<dbReference type="InterPro" id="IPR005813">
    <property type="entry name" value="Ribosomal_bL20"/>
</dbReference>
<dbReference type="InterPro" id="IPR049946">
    <property type="entry name" value="RIBOSOMAL_L20_CS"/>
</dbReference>
<dbReference type="InterPro" id="IPR035566">
    <property type="entry name" value="Ribosomal_protein_bL20_C"/>
</dbReference>
<dbReference type="NCBIfam" id="TIGR01032">
    <property type="entry name" value="rplT_bact"/>
    <property type="match status" value="1"/>
</dbReference>
<dbReference type="PANTHER" id="PTHR10986">
    <property type="entry name" value="39S RIBOSOMAL PROTEIN L20"/>
    <property type="match status" value="1"/>
</dbReference>
<dbReference type="Pfam" id="PF00453">
    <property type="entry name" value="Ribosomal_L20"/>
    <property type="match status" value="1"/>
</dbReference>
<dbReference type="PRINTS" id="PR00062">
    <property type="entry name" value="RIBOSOMALL20"/>
</dbReference>
<dbReference type="SUPFAM" id="SSF74731">
    <property type="entry name" value="Ribosomal protein L20"/>
    <property type="match status" value="1"/>
</dbReference>
<dbReference type="PROSITE" id="PS00937">
    <property type="entry name" value="RIBOSOMAL_L20"/>
    <property type="match status" value="1"/>
</dbReference>
<gene>
    <name evidence="1" type="primary">rplT</name>
    <name type="ordered locus">SRU_2805</name>
</gene>
<protein>
    <recommendedName>
        <fullName evidence="1">Large ribosomal subunit protein bL20</fullName>
    </recommendedName>
    <alternativeName>
        <fullName evidence="2">50S ribosomal protein L20</fullName>
    </alternativeName>
</protein>
<feature type="chain" id="PRO_0000243731" description="Large ribosomal subunit protein bL20">
    <location>
        <begin position="1"/>
        <end position="115"/>
    </location>
</feature>
<evidence type="ECO:0000255" key="1">
    <source>
        <dbReference type="HAMAP-Rule" id="MF_00382"/>
    </source>
</evidence>
<evidence type="ECO:0000305" key="2"/>